<accession>Q4P8B7</accession>
<accession>A0A0D1CN66</accession>
<name>MMM1_MYCMD</name>
<sequence length="579" mass="61919">MQQPQQQDLQIGLPYAPVQPPIPSPAAYFAYLPSPSRWTFTQGLIVGQVSMVIVALLLIRYVIFEDSATALEKERLMRLKVSQRRSKLHAKALLQDARKANSAAASAAAAAAPSPASHPLRKSHRLASDTRASMFANILDKTAYDLSSHLPESADWLNVMFAQAIAGYREDVLTGGVSSHHHTASDAIPSPNPLEPQKERTARDLMEEILNRATSSFLDPIRVTEADFGDAYPIFTNARVRPADDTGRTRIEIDVDYSDQITLAIDTKLLINFPKPRFAVLPVSLGLTIVRFSGTLAIELFSSDPNATVLPTANPNPSSSSSSSATPPRSRHQLHFSLHPDFALEASATSLLGSRAKLQDIPKIEQLLISRLRGWIMDRFVWPRYWSLTLPNLVPSPAASRSFSAAAAANRHTDAASVGSSGGHGQINVGTGVERTDASVIQPGHHESARQEMLHAASERPSLASSRPPHVRSSSSGLRANGMGSVEAWRAHAAGVYNQPSHQHATSLNQAALLRAHVGGGGATDCAPGSDVNIEVPGSYRGSVAGAGIELASSSNASSVLPTGAHHSSGLRNRPGFVQ</sequence>
<organism>
    <name type="scientific">Mycosarcoma maydis</name>
    <name type="common">Corn smut fungus</name>
    <name type="synonym">Ustilago maydis</name>
    <dbReference type="NCBI Taxonomy" id="5270"/>
    <lineage>
        <taxon>Eukaryota</taxon>
        <taxon>Fungi</taxon>
        <taxon>Dikarya</taxon>
        <taxon>Basidiomycota</taxon>
        <taxon>Ustilaginomycotina</taxon>
        <taxon>Ustilaginomycetes</taxon>
        <taxon>Ustilaginales</taxon>
        <taxon>Ustilaginaceae</taxon>
        <taxon>Mycosarcoma</taxon>
    </lineage>
</organism>
<gene>
    <name evidence="1" type="primary">MMM1</name>
    <name type="ORF">UMAG_11963</name>
</gene>
<reference key="1">
    <citation type="journal article" date="2006" name="Nature">
        <title>Insights from the genome of the biotrophic fungal plant pathogen Ustilago maydis.</title>
        <authorList>
            <person name="Kaemper J."/>
            <person name="Kahmann R."/>
            <person name="Boelker M."/>
            <person name="Ma L.-J."/>
            <person name="Brefort T."/>
            <person name="Saville B.J."/>
            <person name="Banuett F."/>
            <person name="Kronstad J.W."/>
            <person name="Gold S.E."/>
            <person name="Mueller O."/>
            <person name="Perlin M.H."/>
            <person name="Woesten H.A.B."/>
            <person name="de Vries R."/>
            <person name="Ruiz-Herrera J."/>
            <person name="Reynaga-Pena C.G."/>
            <person name="Snetselaar K."/>
            <person name="McCann M."/>
            <person name="Perez-Martin J."/>
            <person name="Feldbruegge M."/>
            <person name="Basse C.W."/>
            <person name="Steinberg G."/>
            <person name="Ibeas J.I."/>
            <person name="Holloman W."/>
            <person name="Guzman P."/>
            <person name="Farman M.L."/>
            <person name="Stajich J.E."/>
            <person name="Sentandreu R."/>
            <person name="Gonzalez-Prieto J.M."/>
            <person name="Kennell J.C."/>
            <person name="Molina L."/>
            <person name="Schirawski J."/>
            <person name="Mendoza-Mendoza A."/>
            <person name="Greilinger D."/>
            <person name="Muench K."/>
            <person name="Roessel N."/>
            <person name="Scherer M."/>
            <person name="Vranes M."/>
            <person name="Ladendorf O."/>
            <person name="Vincon V."/>
            <person name="Fuchs U."/>
            <person name="Sandrock B."/>
            <person name="Meng S."/>
            <person name="Ho E.C.H."/>
            <person name="Cahill M.J."/>
            <person name="Boyce K.J."/>
            <person name="Klose J."/>
            <person name="Klosterman S.J."/>
            <person name="Deelstra H.J."/>
            <person name="Ortiz-Castellanos L."/>
            <person name="Li W."/>
            <person name="Sanchez-Alonso P."/>
            <person name="Schreier P.H."/>
            <person name="Haeuser-Hahn I."/>
            <person name="Vaupel M."/>
            <person name="Koopmann E."/>
            <person name="Friedrich G."/>
            <person name="Voss H."/>
            <person name="Schlueter T."/>
            <person name="Margolis J."/>
            <person name="Platt D."/>
            <person name="Swimmer C."/>
            <person name="Gnirke A."/>
            <person name="Chen F."/>
            <person name="Vysotskaia V."/>
            <person name="Mannhaupt G."/>
            <person name="Gueldener U."/>
            <person name="Muensterkoetter M."/>
            <person name="Haase D."/>
            <person name="Oesterheld M."/>
            <person name="Mewes H.-W."/>
            <person name="Mauceli E.W."/>
            <person name="DeCaprio D."/>
            <person name="Wade C.M."/>
            <person name="Butler J."/>
            <person name="Young S.K."/>
            <person name="Jaffe D.B."/>
            <person name="Calvo S.E."/>
            <person name="Nusbaum C."/>
            <person name="Galagan J.E."/>
            <person name="Birren B.W."/>
        </authorList>
    </citation>
    <scope>NUCLEOTIDE SEQUENCE [LARGE SCALE GENOMIC DNA]</scope>
    <source>
        <strain>DSM 14603 / FGSC 9021 / UM521</strain>
    </source>
</reference>
<reference key="2">
    <citation type="submission" date="2014-09" db="EMBL/GenBank/DDBJ databases">
        <authorList>
            <person name="Gueldener U."/>
            <person name="Muensterkoetter M."/>
            <person name="Walter M.C."/>
            <person name="Mannhaupt G."/>
            <person name="Kahmann R."/>
        </authorList>
    </citation>
    <scope>GENOME REANNOTATION</scope>
    <source>
        <strain>DSM 14603 / FGSC 9021 / UM521</strain>
    </source>
</reference>
<proteinExistence type="inferred from homology"/>
<comment type="function">
    <text evidence="1">Component of the ERMES/MDM complex, which serves as a molecular tether to connect the endoplasmic reticulum (ER) and mitochondria. Components of this complex are involved in the control of mitochondrial shape and protein biogenesis, and function in nonvesicular lipid trafficking between the ER and mitochondria. The MDM12-MMM1 subcomplex functions in the major beta-barrel assembly pathway that is responsible for biogenesis of all outer membrane beta-barrel proteins, and acts in a late step after the SAM complex. The MDM10-MDM12-MMM1 subcomplex further acts in the TOM40-specific pathway after the action of the MDM12-MMM1 complex. Essential for establishing and maintaining the structure of mitochondria and maintenance of mtDNA nucleoids.</text>
</comment>
<comment type="subunit">
    <text evidence="1">Homodimer. Component of the ER-mitochondria encounter structure (ERMES) or MDM complex, composed of MMM1, MDM10, MDM12 and MDM34. A MMM1 homodimer associates with one molecule of MDM12 on each side in a pairwise head-to-tail manner, and the SMP-LTD domains of MMM1 and MDM12 generate a continuous hydrophobic tunnel for phospholipid trafficking.</text>
</comment>
<comment type="subcellular location">
    <subcellularLocation>
        <location evidence="1">Endoplasmic reticulum membrane</location>
        <topology evidence="1">Single-pass type I membrane protein</topology>
    </subcellularLocation>
    <text evidence="1">The ERMES/MDM complex localizes to a few discrete foci (around 10 per single cell), that represent mitochondria-endoplasmic reticulum junctions. These foci are often found next to mtDNA nucleoids.</text>
</comment>
<comment type="domain">
    <text evidence="1">The SMP-LTD domain is a barrel-like domain that can bind various types of glycerophospholipids in its interior and mediate their transfer between two adjacent bilayers.</text>
</comment>
<comment type="similarity">
    <text evidence="1">Belongs to the MMM1 family.</text>
</comment>
<dbReference type="EMBL" id="CM003149">
    <property type="protein sequence ID" value="KIS68063.1"/>
    <property type="molecule type" value="Genomic_DNA"/>
</dbReference>
<dbReference type="RefSeq" id="XP_011390353.1">
    <property type="nucleotide sequence ID" value="XM_011392051.1"/>
</dbReference>
<dbReference type="SMR" id="Q4P8B7"/>
<dbReference type="FunCoup" id="Q4P8B7">
    <property type="interactions" value="77"/>
</dbReference>
<dbReference type="STRING" id="237631.Q4P8B7"/>
<dbReference type="EnsemblFungi" id="KIS68063">
    <property type="protein sequence ID" value="KIS68063"/>
    <property type="gene ID" value="UMAG_11963"/>
</dbReference>
<dbReference type="GeneID" id="23567766"/>
<dbReference type="KEGG" id="uma:UMAG_11963"/>
<dbReference type="VEuPathDB" id="FungiDB:UMAG_11963"/>
<dbReference type="eggNOG" id="ENOG502QUUW">
    <property type="taxonomic scope" value="Eukaryota"/>
</dbReference>
<dbReference type="InParanoid" id="Q4P8B7"/>
<dbReference type="OrthoDB" id="5599157at2759"/>
<dbReference type="Proteomes" id="UP000000561">
    <property type="component" value="Chromosome 10"/>
</dbReference>
<dbReference type="GO" id="GO:0005783">
    <property type="term" value="C:endoplasmic reticulum"/>
    <property type="evidence" value="ECO:0000318"/>
    <property type="project" value="GO_Central"/>
</dbReference>
<dbReference type="GO" id="GO:0005789">
    <property type="term" value="C:endoplasmic reticulum membrane"/>
    <property type="evidence" value="ECO:0007669"/>
    <property type="project" value="UniProtKB-SubCell"/>
</dbReference>
<dbReference type="GO" id="GO:0032865">
    <property type="term" value="C:ERMES complex"/>
    <property type="evidence" value="ECO:0000318"/>
    <property type="project" value="GO_Central"/>
</dbReference>
<dbReference type="GO" id="GO:0008289">
    <property type="term" value="F:lipid binding"/>
    <property type="evidence" value="ECO:0000318"/>
    <property type="project" value="GO_Central"/>
</dbReference>
<dbReference type="GO" id="GO:0015917">
    <property type="term" value="P:aminophospholipid transport"/>
    <property type="evidence" value="ECO:0000318"/>
    <property type="project" value="GO_Central"/>
</dbReference>
<dbReference type="GO" id="GO:0120009">
    <property type="term" value="P:intermembrane lipid transfer"/>
    <property type="evidence" value="ECO:0007669"/>
    <property type="project" value="GOC"/>
</dbReference>
<dbReference type="GO" id="GO:0000002">
    <property type="term" value="P:mitochondrial genome maintenance"/>
    <property type="evidence" value="ECO:0007669"/>
    <property type="project" value="UniProtKB-UniRule"/>
</dbReference>
<dbReference type="GO" id="GO:1990456">
    <property type="term" value="P:mitochondrion-endoplasmic reticulum membrane tethering"/>
    <property type="evidence" value="ECO:0000318"/>
    <property type="project" value="GO_Central"/>
</dbReference>
<dbReference type="GO" id="GO:0045040">
    <property type="term" value="P:protein insertion into mitochondrial outer membrane"/>
    <property type="evidence" value="ECO:0007669"/>
    <property type="project" value="UniProtKB-UniRule"/>
</dbReference>
<dbReference type="CDD" id="cd21671">
    <property type="entry name" value="SMP_Mmm1"/>
    <property type="match status" value="1"/>
</dbReference>
<dbReference type="HAMAP" id="MF_03103">
    <property type="entry name" value="Mmm1"/>
    <property type="match status" value="1"/>
</dbReference>
<dbReference type="InterPro" id="IPR027537">
    <property type="entry name" value="Mmm1"/>
</dbReference>
<dbReference type="InterPro" id="IPR019411">
    <property type="entry name" value="MMM1_dom"/>
</dbReference>
<dbReference type="InterPro" id="IPR031468">
    <property type="entry name" value="SMP_LBD"/>
</dbReference>
<dbReference type="PANTHER" id="PTHR13466:SF0">
    <property type="entry name" value="SMP-LTD DOMAIN-CONTAINING PROTEIN"/>
    <property type="match status" value="1"/>
</dbReference>
<dbReference type="PANTHER" id="PTHR13466">
    <property type="entry name" value="TEX2 PROTEIN-RELATED"/>
    <property type="match status" value="1"/>
</dbReference>
<dbReference type="Pfam" id="PF10296">
    <property type="entry name" value="MMM1"/>
    <property type="match status" value="1"/>
</dbReference>
<dbReference type="PROSITE" id="PS51847">
    <property type="entry name" value="SMP"/>
    <property type="match status" value="1"/>
</dbReference>
<feature type="chain" id="PRO_0000384258" description="Maintenance of mitochondrial morphology protein 1">
    <location>
        <begin position="1"/>
        <end position="579"/>
    </location>
</feature>
<feature type="topological domain" description="Lumenal" evidence="1">
    <location>
        <begin position="1"/>
        <end position="43"/>
    </location>
</feature>
<feature type="transmembrane region" description="Helical" evidence="1">
    <location>
        <begin position="44"/>
        <end position="64"/>
    </location>
</feature>
<feature type="topological domain" description="Cytoplasmic" evidence="1">
    <location>
        <begin position="65"/>
        <end position="579"/>
    </location>
</feature>
<feature type="domain" description="SMP-LTD" evidence="1">
    <location>
        <begin position="150"/>
        <end position="391"/>
    </location>
</feature>
<feature type="region of interest" description="Disordered" evidence="2">
    <location>
        <begin position="309"/>
        <end position="332"/>
    </location>
</feature>
<feature type="region of interest" description="Disordered" evidence="2">
    <location>
        <begin position="460"/>
        <end position="479"/>
    </location>
</feature>
<feature type="region of interest" description="Disordered" evidence="2">
    <location>
        <begin position="558"/>
        <end position="579"/>
    </location>
</feature>
<feature type="compositionally biased region" description="Low complexity" evidence="2">
    <location>
        <begin position="311"/>
        <end position="328"/>
    </location>
</feature>
<feature type="compositionally biased region" description="Low complexity" evidence="2">
    <location>
        <begin position="465"/>
        <end position="476"/>
    </location>
</feature>
<keyword id="KW-0256">Endoplasmic reticulum</keyword>
<keyword id="KW-0445">Lipid transport</keyword>
<keyword id="KW-0446">Lipid-binding</keyword>
<keyword id="KW-0472">Membrane</keyword>
<keyword id="KW-1185">Reference proteome</keyword>
<keyword id="KW-0812">Transmembrane</keyword>
<keyword id="KW-1133">Transmembrane helix</keyword>
<keyword id="KW-0813">Transport</keyword>
<protein>
    <recommendedName>
        <fullName evidence="1">Maintenance of mitochondrial morphology protein 1</fullName>
    </recommendedName>
</protein>
<evidence type="ECO:0000255" key="1">
    <source>
        <dbReference type="HAMAP-Rule" id="MF_03103"/>
    </source>
</evidence>
<evidence type="ECO:0000256" key="2">
    <source>
        <dbReference type="SAM" id="MobiDB-lite"/>
    </source>
</evidence>